<reference key="1">
    <citation type="journal article" date="2001" name="Nature">
        <title>Complete genome sequence of Salmonella enterica serovar Typhimurium LT2.</title>
        <authorList>
            <person name="McClelland M."/>
            <person name="Sanderson K.E."/>
            <person name="Spieth J."/>
            <person name="Clifton S.W."/>
            <person name="Latreille P."/>
            <person name="Courtney L."/>
            <person name="Porwollik S."/>
            <person name="Ali J."/>
            <person name="Dante M."/>
            <person name="Du F."/>
            <person name="Hou S."/>
            <person name="Layman D."/>
            <person name="Leonard S."/>
            <person name="Nguyen C."/>
            <person name="Scott K."/>
            <person name="Holmes A."/>
            <person name="Grewal N."/>
            <person name="Mulvaney E."/>
            <person name="Ryan E."/>
            <person name="Sun H."/>
            <person name="Florea L."/>
            <person name="Miller W."/>
            <person name="Stoneking T."/>
            <person name="Nhan M."/>
            <person name="Waterston R."/>
            <person name="Wilson R.K."/>
        </authorList>
    </citation>
    <scope>NUCLEOTIDE SEQUENCE [LARGE SCALE GENOMIC DNA]</scope>
    <source>
        <strain>LT2 / SGSC1412 / ATCC 700720</strain>
    </source>
</reference>
<gene>
    <name evidence="1" type="primary">proS</name>
    <name type="ordered locus">STM0242</name>
</gene>
<dbReference type="EC" id="6.1.1.15" evidence="1"/>
<dbReference type="EMBL" id="AE006468">
    <property type="protein sequence ID" value="AAL19205.1"/>
    <property type="molecule type" value="Genomic_DNA"/>
</dbReference>
<dbReference type="RefSeq" id="NP_459246.1">
    <property type="nucleotide sequence ID" value="NC_003197.2"/>
</dbReference>
<dbReference type="RefSeq" id="WP_001260683.1">
    <property type="nucleotide sequence ID" value="NC_003197.2"/>
</dbReference>
<dbReference type="SMR" id="Q7CR62"/>
<dbReference type="STRING" id="99287.STM0242"/>
<dbReference type="PaxDb" id="99287-STM0242"/>
<dbReference type="GeneID" id="1251760"/>
<dbReference type="KEGG" id="stm:STM0242"/>
<dbReference type="PATRIC" id="fig|99287.12.peg.256"/>
<dbReference type="HOGENOM" id="CLU_016739_0_0_6"/>
<dbReference type="OMA" id="NCDYAAN"/>
<dbReference type="PhylomeDB" id="Q7CR62"/>
<dbReference type="BioCyc" id="SENT99287:STM0242-MONOMER"/>
<dbReference type="Proteomes" id="UP000001014">
    <property type="component" value="Chromosome"/>
</dbReference>
<dbReference type="GO" id="GO:0005829">
    <property type="term" value="C:cytosol"/>
    <property type="evidence" value="ECO:0000318"/>
    <property type="project" value="GO_Central"/>
</dbReference>
<dbReference type="GO" id="GO:0002161">
    <property type="term" value="F:aminoacyl-tRNA deacylase activity"/>
    <property type="evidence" value="ECO:0007669"/>
    <property type="project" value="InterPro"/>
</dbReference>
<dbReference type="GO" id="GO:0005524">
    <property type="term" value="F:ATP binding"/>
    <property type="evidence" value="ECO:0007669"/>
    <property type="project" value="UniProtKB-UniRule"/>
</dbReference>
<dbReference type="GO" id="GO:0004827">
    <property type="term" value="F:proline-tRNA ligase activity"/>
    <property type="evidence" value="ECO:0000318"/>
    <property type="project" value="GO_Central"/>
</dbReference>
<dbReference type="GO" id="GO:0006433">
    <property type="term" value="P:prolyl-tRNA aminoacylation"/>
    <property type="evidence" value="ECO:0000318"/>
    <property type="project" value="GO_Central"/>
</dbReference>
<dbReference type="CDD" id="cd04334">
    <property type="entry name" value="ProRS-INS"/>
    <property type="match status" value="1"/>
</dbReference>
<dbReference type="CDD" id="cd00861">
    <property type="entry name" value="ProRS_anticodon_short"/>
    <property type="match status" value="1"/>
</dbReference>
<dbReference type="CDD" id="cd00779">
    <property type="entry name" value="ProRS_core_prok"/>
    <property type="match status" value="1"/>
</dbReference>
<dbReference type="FunFam" id="3.30.930.10:FF:000012">
    <property type="entry name" value="Proline--tRNA ligase"/>
    <property type="match status" value="1"/>
</dbReference>
<dbReference type="FunFam" id="3.30.930.10:FF:000097">
    <property type="entry name" value="Proline--tRNA ligase"/>
    <property type="match status" value="1"/>
</dbReference>
<dbReference type="FunFam" id="3.40.50.800:FF:000006">
    <property type="entry name" value="Proline--tRNA ligase"/>
    <property type="match status" value="1"/>
</dbReference>
<dbReference type="FunFam" id="3.90.960.10:FF:000001">
    <property type="entry name" value="Proline--tRNA ligase"/>
    <property type="match status" value="1"/>
</dbReference>
<dbReference type="Gene3D" id="3.40.50.800">
    <property type="entry name" value="Anticodon-binding domain"/>
    <property type="match status" value="1"/>
</dbReference>
<dbReference type="Gene3D" id="3.30.930.10">
    <property type="entry name" value="Bira Bifunctional Protein, Domain 2"/>
    <property type="match status" value="2"/>
</dbReference>
<dbReference type="Gene3D" id="3.90.960.10">
    <property type="entry name" value="YbaK/aminoacyl-tRNA synthetase-associated domain"/>
    <property type="match status" value="1"/>
</dbReference>
<dbReference type="HAMAP" id="MF_01569">
    <property type="entry name" value="Pro_tRNA_synth_type1"/>
    <property type="match status" value="1"/>
</dbReference>
<dbReference type="InterPro" id="IPR002314">
    <property type="entry name" value="aa-tRNA-synt_IIb"/>
</dbReference>
<dbReference type="InterPro" id="IPR006195">
    <property type="entry name" value="aa-tRNA-synth_II"/>
</dbReference>
<dbReference type="InterPro" id="IPR045864">
    <property type="entry name" value="aa-tRNA-synth_II/BPL/LPL"/>
</dbReference>
<dbReference type="InterPro" id="IPR004154">
    <property type="entry name" value="Anticodon-bd"/>
</dbReference>
<dbReference type="InterPro" id="IPR036621">
    <property type="entry name" value="Anticodon-bd_dom_sf"/>
</dbReference>
<dbReference type="InterPro" id="IPR002316">
    <property type="entry name" value="Pro-tRNA-ligase_IIa"/>
</dbReference>
<dbReference type="InterPro" id="IPR004500">
    <property type="entry name" value="Pro-tRNA-synth_IIa_bac-type"/>
</dbReference>
<dbReference type="InterPro" id="IPR023717">
    <property type="entry name" value="Pro-tRNA-Synthase_IIa_type1"/>
</dbReference>
<dbReference type="InterPro" id="IPR050062">
    <property type="entry name" value="Pro-tRNA_synthetase"/>
</dbReference>
<dbReference type="InterPro" id="IPR044140">
    <property type="entry name" value="ProRS_anticodon_short"/>
</dbReference>
<dbReference type="InterPro" id="IPR033730">
    <property type="entry name" value="ProRS_core_prok"/>
</dbReference>
<dbReference type="InterPro" id="IPR036754">
    <property type="entry name" value="YbaK/aa-tRNA-synt-asso_dom_sf"/>
</dbReference>
<dbReference type="InterPro" id="IPR007214">
    <property type="entry name" value="YbaK/aa-tRNA-synth-assoc-dom"/>
</dbReference>
<dbReference type="NCBIfam" id="NF006625">
    <property type="entry name" value="PRK09194.1"/>
    <property type="match status" value="1"/>
</dbReference>
<dbReference type="NCBIfam" id="TIGR00409">
    <property type="entry name" value="proS_fam_II"/>
    <property type="match status" value="1"/>
</dbReference>
<dbReference type="PANTHER" id="PTHR42753">
    <property type="entry name" value="MITOCHONDRIAL RIBOSOME PROTEIN L39/PROLYL-TRNA LIGASE FAMILY MEMBER"/>
    <property type="match status" value="1"/>
</dbReference>
<dbReference type="PANTHER" id="PTHR42753:SF2">
    <property type="entry name" value="PROLINE--TRNA LIGASE"/>
    <property type="match status" value="1"/>
</dbReference>
<dbReference type="Pfam" id="PF03129">
    <property type="entry name" value="HGTP_anticodon"/>
    <property type="match status" value="1"/>
</dbReference>
<dbReference type="Pfam" id="PF00587">
    <property type="entry name" value="tRNA-synt_2b"/>
    <property type="match status" value="1"/>
</dbReference>
<dbReference type="Pfam" id="PF04073">
    <property type="entry name" value="tRNA_edit"/>
    <property type="match status" value="1"/>
</dbReference>
<dbReference type="PIRSF" id="PIRSF001535">
    <property type="entry name" value="ProRS_1"/>
    <property type="match status" value="1"/>
</dbReference>
<dbReference type="PRINTS" id="PR01046">
    <property type="entry name" value="TRNASYNTHPRO"/>
</dbReference>
<dbReference type="SUPFAM" id="SSF52954">
    <property type="entry name" value="Class II aaRS ABD-related"/>
    <property type="match status" value="1"/>
</dbReference>
<dbReference type="SUPFAM" id="SSF55681">
    <property type="entry name" value="Class II aaRS and biotin synthetases"/>
    <property type="match status" value="1"/>
</dbReference>
<dbReference type="SUPFAM" id="SSF55826">
    <property type="entry name" value="YbaK/ProRS associated domain"/>
    <property type="match status" value="1"/>
</dbReference>
<dbReference type="PROSITE" id="PS50862">
    <property type="entry name" value="AA_TRNA_LIGASE_II"/>
    <property type="match status" value="1"/>
</dbReference>
<organism>
    <name type="scientific">Salmonella typhimurium (strain LT2 / SGSC1412 / ATCC 700720)</name>
    <dbReference type="NCBI Taxonomy" id="99287"/>
    <lineage>
        <taxon>Bacteria</taxon>
        <taxon>Pseudomonadati</taxon>
        <taxon>Pseudomonadota</taxon>
        <taxon>Gammaproteobacteria</taxon>
        <taxon>Enterobacterales</taxon>
        <taxon>Enterobacteriaceae</taxon>
        <taxon>Salmonella</taxon>
    </lineage>
</organism>
<comment type="function">
    <text evidence="1">Catalyzes the attachment of proline to tRNA(Pro) in a two-step reaction: proline is first activated by ATP to form Pro-AMP and then transferred to the acceptor end of tRNA(Pro). As ProRS can inadvertently accommodate and process non-cognate amino acids such as alanine and cysteine, to avoid such errors it has two additional distinct editing activities against alanine. One activity is designated as 'pretransfer' editing and involves the tRNA(Pro)-independent hydrolysis of activated Ala-AMP. The other activity is designated 'posttransfer' editing and involves deacylation of mischarged Ala-tRNA(Pro). The misacylated Cys-tRNA(Pro) is not edited by ProRS.</text>
</comment>
<comment type="catalytic activity">
    <reaction evidence="1">
        <text>tRNA(Pro) + L-proline + ATP = L-prolyl-tRNA(Pro) + AMP + diphosphate</text>
        <dbReference type="Rhea" id="RHEA:14305"/>
        <dbReference type="Rhea" id="RHEA-COMP:9700"/>
        <dbReference type="Rhea" id="RHEA-COMP:9702"/>
        <dbReference type="ChEBI" id="CHEBI:30616"/>
        <dbReference type="ChEBI" id="CHEBI:33019"/>
        <dbReference type="ChEBI" id="CHEBI:60039"/>
        <dbReference type="ChEBI" id="CHEBI:78442"/>
        <dbReference type="ChEBI" id="CHEBI:78532"/>
        <dbReference type="ChEBI" id="CHEBI:456215"/>
        <dbReference type="EC" id="6.1.1.15"/>
    </reaction>
</comment>
<comment type="subunit">
    <text evidence="1">Homodimer.</text>
</comment>
<comment type="subcellular location">
    <subcellularLocation>
        <location evidence="1">Cytoplasm</location>
    </subcellularLocation>
</comment>
<comment type="domain">
    <text evidence="1">Consists of three domains: the N-terminal catalytic domain, the editing domain and the C-terminal anticodon-binding domain.</text>
</comment>
<comment type="similarity">
    <text evidence="1">Belongs to the class-II aminoacyl-tRNA synthetase family. ProS type 1 subfamily.</text>
</comment>
<evidence type="ECO:0000255" key="1">
    <source>
        <dbReference type="HAMAP-Rule" id="MF_01569"/>
    </source>
</evidence>
<sequence length="572" mass="63540">MRTSQYLLSTLKETPADAEVISHQLMLRAGMIRKLASGLYTWLPTGLRVLKKVENIVREEMNNAGAIEVSMPVVQPADLWQESGRWEQYGPELLRFVDRGERPFVLGPTHEEVITDLVRNELSSYKQLPLNFFQIQTKFRDEVRPRFGVMRSREFLMKDAYSFHTSQESLQETYDAMYAAYSRIFSRMGLDFRAVQADTGSIGGNASHEFQVLAQSGEDDIVFSDVSDYAANIELAEAIAPQTPRAAATQEMTLVDTPNAKTIAELVEQFNLPIEKTVKTLLVKAVKDSKSPLVALLVRGDHELNEVKAEKLPHVASPLTFATEEEIRAVINAGPGSLGPVNMPIPVIIDRTVAAMSDFAAGANIDGKHYFGINWDRDVATPVVADIRNVVAGDPSPDGQGTLLIKRGIEVGHIFQLGTKYSEALKASVQGEDGRNQILTMGCYGIGVTRVVAAAIEQNFDERGIVWPDAIAPFQVAILPMNMHKSFRVQELAEKLYSELRAQGIEVLMDDRKERPGVMFADMELIGIPHTIVIGDRNLDNDDIEYKYRRSGEKSLIKTGDIVDYLVKAIKG</sequence>
<accession>Q7CR62</accession>
<keyword id="KW-0030">Aminoacyl-tRNA synthetase</keyword>
<keyword id="KW-0067">ATP-binding</keyword>
<keyword id="KW-0963">Cytoplasm</keyword>
<keyword id="KW-0436">Ligase</keyword>
<keyword id="KW-0547">Nucleotide-binding</keyword>
<keyword id="KW-0648">Protein biosynthesis</keyword>
<keyword id="KW-1185">Reference proteome</keyword>
<protein>
    <recommendedName>
        <fullName evidence="1">Proline--tRNA ligase</fullName>
        <ecNumber evidence="1">6.1.1.15</ecNumber>
    </recommendedName>
    <alternativeName>
        <fullName evidence="1">Prolyl-tRNA synthetase</fullName>
        <shortName evidence="1">ProRS</shortName>
    </alternativeName>
</protein>
<feature type="chain" id="PRO_0000248761" description="Proline--tRNA ligase">
    <location>
        <begin position="1"/>
        <end position="572"/>
    </location>
</feature>
<name>SYP_SALTY</name>
<proteinExistence type="inferred from homology"/>